<sequence length="128" mass="13639">AECKVTVDSTDQMSFNTKAIEIDKSCKTFTVELTHSGSLPKNVMGHNWVLSSAADMPGIASDGMAAGIDKNYLKEGDIRVIAHTKIIGAGEKDSVTFDVSKLAAGTDYAFFCSFPGHISMMKGTVTVK</sequence>
<organism>
    <name type="scientific">Pseudomonas fluorescens biotype A</name>
    <dbReference type="NCBI Taxonomy" id="32035"/>
    <lineage>
        <taxon>Bacteria</taxon>
        <taxon>Pseudomonadati</taxon>
        <taxon>Pseudomonadota</taxon>
        <taxon>Gammaproteobacteria</taxon>
        <taxon>Pseudomonadales</taxon>
        <taxon>Pseudomonadaceae</taxon>
        <taxon>Pseudomonas</taxon>
    </lineage>
</organism>
<comment type="function">
    <text>Transfers electrons from cytochrome c551 to cytochrome oxidase.</text>
</comment>
<comment type="subcellular location">
    <subcellularLocation>
        <location>Periplasm</location>
    </subcellularLocation>
</comment>
<evidence type="ECO:0000250" key="1"/>
<evidence type="ECO:0007829" key="2">
    <source>
        <dbReference type="PDB" id="1JOI"/>
    </source>
</evidence>
<accession>P80546</accession>
<reference key="1">
    <citation type="journal article" date="1997" name="Acta Crystallogr. D">
        <title>Primary sequence and refined tertiary structure of Pseudomonas fluorescens holo azurin at 2.05 A.</title>
        <authorList>
            <person name="Lee X."/>
            <person name="Dahms T."/>
            <person name="Ton-That H."/>
            <person name="Zhu D.-W."/>
            <person name="Biesterfeldt J."/>
            <person name="Lanthier P.H."/>
            <person name="Yaguchi M."/>
            <person name="Szabo A.G."/>
        </authorList>
    </citation>
    <scope>PROTEIN SEQUENCE</scope>
    <scope>X-RAY CRYSTALLOGRAPHY (2.05 ANGSTROMS)</scope>
    <source>
        <strain>ATCC 13525 / DSM 50090 / JCM 5963 / NBRC 14160 / NCIMB 9046 / NCTC 10038 / VKM B-894</strain>
    </source>
</reference>
<keyword id="KW-0002">3D-structure</keyword>
<keyword id="KW-0186">Copper</keyword>
<keyword id="KW-0903">Direct protein sequencing</keyword>
<keyword id="KW-1015">Disulfide bond</keyword>
<keyword id="KW-0249">Electron transport</keyword>
<keyword id="KW-0479">Metal-binding</keyword>
<keyword id="KW-0574">Periplasm</keyword>
<keyword id="KW-0813">Transport</keyword>
<proteinExistence type="evidence at protein level"/>
<feature type="chain" id="PRO_0000085548" description="Azurin">
    <location>
        <begin position="1"/>
        <end position="128"/>
    </location>
</feature>
<feature type="domain" description="Plastocyanin-like">
    <location>
        <begin position="1"/>
        <end position="128"/>
    </location>
</feature>
<feature type="binding site" evidence="1">
    <location>
        <position position="46"/>
    </location>
    <ligand>
        <name>Cu cation</name>
        <dbReference type="ChEBI" id="CHEBI:23378"/>
    </ligand>
</feature>
<feature type="binding site" evidence="1">
    <location>
        <position position="112"/>
    </location>
    <ligand>
        <name>Cu cation</name>
        <dbReference type="ChEBI" id="CHEBI:23378"/>
    </ligand>
</feature>
<feature type="binding site" evidence="1">
    <location>
        <position position="117"/>
    </location>
    <ligand>
        <name>Cu cation</name>
        <dbReference type="ChEBI" id="CHEBI:23378"/>
    </ligand>
</feature>
<feature type="binding site" evidence="1">
    <location>
        <position position="121"/>
    </location>
    <ligand>
        <name>Cu cation</name>
        <dbReference type="ChEBI" id="CHEBI:23378"/>
    </ligand>
</feature>
<feature type="disulfide bond">
    <location>
        <begin position="3"/>
        <end position="26"/>
    </location>
</feature>
<feature type="strand" evidence="2">
    <location>
        <begin position="3"/>
        <end position="9"/>
    </location>
</feature>
<feature type="strand" evidence="2">
    <location>
        <begin position="18"/>
        <end position="23"/>
    </location>
</feature>
<feature type="strand" evidence="2">
    <location>
        <begin position="27"/>
        <end position="35"/>
    </location>
</feature>
<feature type="helix" evidence="2">
    <location>
        <begin position="41"/>
        <end position="44"/>
    </location>
</feature>
<feature type="strand" evidence="2">
    <location>
        <begin position="49"/>
        <end position="52"/>
    </location>
</feature>
<feature type="helix" evidence="2">
    <location>
        <begin position="53"/>
        <end position="55"/>
    </location>
</feature>
<feature type="helix" evidence="2">
    <location>
        <begin position="56"/>
        <end position="66"/>
    </location>
</feature>
<feature type="helix" evidence="2">
    <location>
        <begin position="68"/>
        <end position="70"/>
    </location>
</feature>
<feature type="strand" evidence="2">
    <location>
        <begin position="92"/>
        <end position="98"/>
    </location>
</feature>
<feature type="helix" evidence="2">
    <location>
        <begin position="99"/>
        <end position="101"/>
    </location>
</feature>
<feature type="strand" evidence="2">
    <location>
        <begin position="108"/>
        <end position="111"/>
    </location>
</feature>
<feature type="helix" evidence="2">
    <location>
        <begin position="117"/>
        <end position="119"/>
    </location>
</feature>
<feature type="strand" evidence="2">
    <location>
        <begin position="121"/>
        <end position="128"/>
    </location>
</feature>
<name>AZUR_PSEFA</name>
<protein>
    <recommendedName>
        <fullName>Azurin</fullName>
    </recommendedName>
</protein>
<dbReference type="PDB" id="1JOI">
    <property type="method" value="X-ray"/>
    <property type="resolution" value="2.05 A"/>
    <property type="chains" value="A=1-128"/>
</dbReference>
<dbReference type="PDBsum" id="1JOI"/>
<dbReference type="SMR" id="P80546"/>
<dbReference type="EvolutionaryTrace" id="P80546"/>
<dbReference type="GO" id="GO:0042597">
    <property type="term" value="C:periplasmic space"/>
    <property type="evidence" value="ECO:0007669"/>
    <property type="project" value="UniProtKB-SubCell"/>
</dbReference>
<dbReference type="GO" id="GO:0005507">
    <property type="term" value="F:copper ion binding"/>
    <property type="evidence" value="ECO:0007669"/>
    <property type="project" value="InterPro"/>
</dbReference>
<dbReference type="GO" id="GO:0009055">
    <property type="term" value="F:electron transfer activity"/>
    <property type="evidence" value="ECO:0007669"/>
    <property type="project" value="InterPro"/>
</dbReference>
<dbReference type="CDD" id="cd13922">
    <property type="entry name" value="Azurin"/>
    <property type="match status" value="1"/>
</dbReference>
<dbReference type="FunFam" id="2.60.40.420:FF:000040">
    <property type="entry name" value="Azurin"/>
    <property type="match status" value="1"/>
</dbReference>
<dbReference type="Gene3D" id="2.60.40.420">
    <property type="entry name" value="Cupredoxins - blue copper proteins"/>
    <property type="match status" value="1"/>
</dbReference>
<dbReference type="InterPro" id="IPR014068">
    <property type="entry name" value="Azurin"/>
</dbReference>
<dbReference type="InterPro" id="IPR000923">
    <property type="entry name" value="BlueCu_1"/>
</dbReference>
<dbReference type="InterPro" id="IPR028871">
    <property type="entry name" value="BlueCu_1_BS"/>
</dbReference>
<dbReference type="InterPro" id="IPR050845">
    <property type="entry name" value="Cu-binding_ET"/>
</dbReference>
<dbReference type="InterPro" id="IPR008972">
    <property type="entry name" value="Cupredoxin"/>
</dbReference>
<dbReference type="NCBIfam" id="TIGR02695">
    <property type="entry name" value="azurin"/>
    <property type="match status" value="1"/>
</dbReference>
<dbReference type="PANTHER" id="PTHR38439">
    <property type="entry name" value="AURACYANIN-B"/>
    <property type="match status" value="1"/>
</dbReference>
<dbReference type="PANTHER" id="PTHR38439:SF2">
    <property type="entry name" value="OUTER MEMBRANE PROTEIN H.8"/>
    <property type="match status" value="1"/>
</dbReference>
<dbReference type="Pfam" id="PF00127">
    <property type="entry name" value="Copper-bind"/>
    <property type="match status" value="1"/>
</dbReference>
<dbReference type="SUPFAM" id="SSF49503">
    <property type="entry name" value="Cupredoxins"/>
    <property type="match status" value="1"/>
</dbReference>
<dbReference type="PROSITE" id="PS00196">
    <property type="entry name" value="COPPER_BLUE"/>
    <property type="match status" value="1"/>
</dbReference>